<dbReference type="EC" id="3.1.3.56" evidence="3 4"/>
<dbReference type="EC" id="3.1.3.86" evidence="1"/>
<dbReference type="EC" id="3.1.3.36" evidence="1"/>
<dbReference type="EMBL" id="U96724">
    <property type="protein sequence ID" value="AAC53265.1"/>
    <property type="molecule type" value="mRNA"/>
</dbReference>
<dbReference type="EMBL" id="U96726">
    <property type="protein sequence ID" value="AAC60757.1"/>
    <property type="molecule type" value="Genomic_DNA"/>
</dbReference>
<dbReference type="EMBL" id="AF483522">
    <property type="protein sequence ID" value="AAL90796.1"/>
    <property type="molecule type" value="mRNA"/>
</dbReference>
<dbReference type="EMBL" id="AF483523">
    <property type="protein sequence ID" value="AAL90797.1"/>
    <property type="molecule type" value="mRNA"/>
</dbReference>
<dbReference type="EMBL" id="AK054436">
    <property type="protein sequence ID" value="BAC35778.1"/>
    <property type="molecule type" value="mRNA"/>
</dbReference>
<dbReference type="EMBL" id="AK078104">
    <property type="protein sequence ID" value="BAC37126.1"/>
    <property type="molecule type" value="mRNA"/>
</dbReference>
<dbReference type="EMBL" id="BC066112">
    <property type="protein sequence ID" value="AAH66112.1"/>
    <property type="molecule type" value="mRNA"/>
</dbReference>
<dbReference type="CCDS" id="CCDS25053.1"/>
<dbReference type="RefSeq" id="NP_032942.1">
    <property type="nucleotide sequence ID" value="NM_008916.2"/>
</dbReference>
<dbReference type="SMR" id="Q8C5L6"/>
<dbReference type="BioGRID" id="202350">
    <property type="interactions" value="1"/>
</dbReference>
<dbReference type="FunCoup" id="Q8C5L6">
    <property type="interactions" value="3277"/>
</dbReference>
<dbReference type="STRING" id="10090.ENSMUSP00000006286"/>
<dbReference type="iPTMnet" id="Q8C5L6"/>
<dbReference type="PhosphoSitePlus" id="Q8C5L6"/>
<dbReference type="jPOST" id="Q8C5L6"/>
<dbReference type="PaxDb" id="10090-ENSMUSP00000006286"/>
<dbReference type="ProteomicsDB" id="269227"/>
<dbReference type="Pumba" id="Q8C5L6"/>
<dbReference type="Antibodypedia" id="22714">
    <property type="antibodies" value="142 antibodies from 25 providers"/>
</dbReference>
<dbReference type="DNASU" id="19062"/>
<dbReference type="Ensembl" id="ENSMUST00000006286.9">
    <property type="protein sequence ID" value="ENSMUSP00000006286.3"/>
    <property type="gene ID" value="ENSMUSG00000006127.10"/>
</dbReference>
<dbReference type="GeneID" id="19062"/>
<dbReference type="KEGG" id="mmu:19062"/>
<dbReference type="UCSC" id="uc007kek.1">
    <property type="organism name" value="mouse"/>
</dbReference>
<dbReference type="AGR" id="MGI:1194899"/>
<dbReference type="CTD" id="51763"/>
<dbReference type="MGI" id="MGI:1194899">
    <property type="gene designation" value="Inpp5k"/>
</dbReference>
<dbReference type="VEuPathDB" id="HostDB:ENSMUSG00000006127"/>
<dbReference type="eggNOG" id="KOG0565">
    <property type="taxonomic scope" value="Eukaryota"/>
</dbReference>
<dbReference type="GeneTree" id="ENSGT00940000156538"/>
<dbReference type="HOGENOM" id="CLU_011711_3_2_1"/>
<dbReference type="InParanoid" id="Q8C5L6"/>
<dbReference type="OMA" id="RFHLLWE"/>
<dbReference type="OrthoDB" id="62798at2759"/>
<dbReference type="PhylomeDB" id="Q8C5L6"/>
<dbReference type="TreeFam" id="TF317034"/>
<dbReference type="Reactome" id="R-MMU-1660499">
    <property type="pathway name" value="Synthesis of PIPs at the plasma membrane"/>
</dbReference>
<dbReference type="BioGRID-ORCS" id="19062">
    <property type="hits" value="20 hits in 80 CRISPR screens"/>
</dbReference>
<dbReference type="ChiTaRS" id="Inpp5k">
    <property type="organism name" value="mouse"/>
</dbReference>
<dbReference type="PRO" id="PR:Q8C5L6"/>
<dbReference type="Proteomes" id="UP000000589">
    <property type="component" value="Chromosome 11"/>
</dbReference>
<dbReference type="RNAct" id="Q8C5L6">
    <property type="molecule type" value="protein"/>
</dbReference>
<dbReference type="Bgee" id="ENSMUSG00000006127">
    <property type="expression patterns" value="Expressed in pigmented layer of retina and 256 other cell types or tissues"/>
</dbReference>
<dbReference type="ExpressionAtlas" id="Q8C5L6">
    <property type="expression patterns" value="baseline and differential"/>
</dbReference>
<dbReference type="GO" id="GO:0005737">
    <property type="term" value="C:cytoplasm"/>
    <property type="evidence" value="ECO:0000314"/>
    <property type="project" value="UniProtKB"/>
</dbReference>
<dbReference type="GO" id="GO:0005829">
    <property type="term" value="C:cytosol"/>
    <property type="evidence" value="ECO:0000250"/>
    <property type="project" value="UniProtKB"/>
</dbReference>
<dbReference type="GO" id="GO:0005783">
    <property type="term" value="C:endoplasmic reticulum"/>
    <property type="evidence" value="ECO:0000314"/>
    <property type="project" value="UniProtKB"/>
</dbReference>
<dbReference type="GO" id="GO:0016020">
    <property type="term" value="C:membrane"/>
    <property type="evidence" value="ECO:0000250"/>
    <property type="project" value="UniProtKB"/>
</dbReference>
<dbReference type="GO" id="GO:0043005">
    <property type="term" value="C:neuron projection"/>
    <property type="evidence" value="ECO:0000250"/>
    <property type="project" value="UniProtKB"/>
</dbReference>
<dbReference type="GO" id="GO:0005634">
    <property type="term" value="C:nucleus"/>
    <property type="evidence" value="ECO:0000250"/>
    <property type="project" value="UniProtKB"/>
</dbReference>
<dbReference type="GO" id="GO:0048471">
    <property type="term" value="C:perinuclear region of cytoplasm"/>
    <property type="evidence" value="ECO:0000250"/>
    <property type="project" value="UniProtKB"/>
</dbReference>
<dbReference type="GO" id="GO:0005886">
    <property type="term" value="C:plasma membrane"/>
    <property type="evidence" value="ECO:0000250"/>
    <property type="project" value="UniProtKB"/>
</dbReference>
<dbReference type="GO" id="GO:0001726">
    <property type="term" value="C:ruffle"/>
    <property type="evidence" value="ECO:0000250"/>
    <property type="project" value="UniProtKB"/>
</dbReference>
<dbReference type="GO" id="GO:0032587">
    <property type="term" value="C:ruffle membrane"/>
    <property type="evidence" value="ECO:0000250"/>
    <property type="project" value="UniProtKB"/>
</dbReference>
<dbReference type="GO" id="GO:0005802">
    <property type="term" value="C:trans-Golgi network"/>
    <property type="evidence" value="ECO:0000250"/>
    <property type="project" value="UniProtKB"/>
</dbReference>
<dbReference type="GO" id="GO:0016312">
    <property type="term" value="F:inositol bisphosphate phosphatase activity"/>
    <property type="evidence" value="ECO:0000315"/>
    <property type="project" value="UniProtKB"/>
</dbReference>
<dbReference type="GO" id="GO:0046030">
    <property type="term" value="F:inositol trisphosphate phosphatase activity"/>
    <property type="evidence" value="ECO:0000250"/>
    <property type="project" value="UniProtKB"/>
</dbReference>
<dbReference type="GO" id="GO:0052659">
    <property type="term" value="F:inositol-1,3,4,5-tetrakisphosphate 5-phosphatase activity"/>
    <property type="evidence" value="ECO:0007669"/>
    <property type="project" value="RHEA"/>
</dbReference>
<dbReference type="GO" id="GO:0052658">
    <property type="term" value="F:inositol-1,4,5-trisphosphate 5-phosphatase activity"/>
    <property type="evidence" value="ECO:0007669"/>
    <property type="project" value="RHEA"/>
</dbReference>
<dbReference type="GO" id="GO:0034595">
    <property type="term" value="F:phosphatidylinositol phosphate 5-phosphatase activity"/>
    <property type="evidence" value="ECO:0000250"/>
    <property type="project" value="UniProtKB"/>
</dbReference>
<dbReference type="GO" id="GO:0034594">
    <property type="term" value="F:phosphatidylinositol trisphosphate phosphatase activity"/>
    <property type="evidence" value="ECO:0000250"/>
    <property type="project" value="UniProtKB"/>
</dbReference>
<dbReference type="GO" id="GO:0034485">
    <property type="term" value="F:phosphatidylinositol-3,4,5-trisphosphate 5-phosphatase activity"/>
    <property type="evidence" value="ECO:0000314"/>
    <property type="project" value="UniProtKB"/>
</dbReference>
<dbReference type="GO" id="GO:0004439">
    <property type="term" value="F:phosphatidylinositol-4,5-bisphosphate 5-phosphatase activity"/>
    <property type="evidence" value="ECO:0000250"/>
    <property type="project" value="UniProtKB"/>
</dbReference>
<dbReference type="GO" id="GO:0005000">
    <property type="term" value="F:vasopressin receptor activity"/>
    <property type="evidence" value="ECO:0000314"/>
    <property type="project" value="UniProtKB"/>
</dbReference>
<dbReference type="GO" id="GO:0071320">
    <property type="term" value="P:cellular response to cAMP"/>
    <property type="evidence" value="ECO:0000314"/>
    <property type="project" value="UniProtKB"/>
</dbReference>
<dbReference type="GO" id="GO:0071364">
    <property type="term" value="P:cellular response to epidermal growth factor stimulus"/>
    <property type="evidence" value="ECO:0000250"/>
    <property type="project" value="UniProtKB"/>
</dbReference>
<dbReference type="GO" id="GO:0032870">
    <property type="term" value="P:cellular response to hormone stimulus"/>
    <property type="evidence" value="ECO:0000314"/>
    <property type="project" value="UniProtKB"/>
</dbReference>
<dbReference type="GO" id="GO:0032869">
    <property type="term" value="P:cellular response to insulin stimulus"/>
    <property type="evidence" value="ECO:0000250"/>
    <property type="project" value="UniProtKB"/>
</dbReference>
<dbReference type="GO" id="GO:0071356">
    <property type="term" value="P:cellular response to tumor necrosis factor"/>
    <property type="evidence" value="ECO:0000250"/>
    <property type="project" value="UniProtKB"/>
</dbReference>
<dbReference type="GO" id="GO:0007186">
    <property type="term" value="P:G protein-coupled receptor signaling pathway"/>
    <property type="evidence" value="ECO:0000314"/>
    <property type="project" value="UniProtKB"/>
</dbReference>
<dbReference type="GO" id="GO:0042593">
    <property type="term" value="P:glucose homeostasis"/>
    <property type="evidence" value="ECO:0000315"/>
    <property type="project" value="UniProtKB"/>
</dbReference>
<dbReference type="GO" id="GO:0001701">
    <property type="term" value="P:in utero embryonic development"/>
    <property type="evidence" value="ECO:0000315"/>
    <property type="project" value="MGI"/>
</dbReference>
<dbReference type="GO" id="GO:0043922">
    <property type="term" value="P:negative regulation by host of viral transcription"/>
    <property type="evidence" value="ECO:0000250"/>
    <property type="project" value="UniProtKB"/>
</dbReference>
<dbReference type="GO" id="GO:0051926">
    <property type="term" value="P:negative regulation of calcium ion transport"/>
    <property type="evidence" value="ECO:0000250"/>
    <property type="project" value="UniProtKB"/>
</dbReference>
<dbReference type="GO" id="GO:0010829">
    <property type="term" value="P:negative regulation of D-glucose transmembrane transport"/>
    <property type="evidence" value="ECO:0000250"/>
    <property type="project" value="UniProtKB"/>
</dbReference>
<dbReference type="GO" id="GO:0035305">
    <property type="term" value="P:negative regulation of dephosphorylation"/>
    <property type="evidence" value="ECO:0000315"/>
    <property type="project" value="UniProtKB"/>
</dbReference>
<dbReference type="GO" id="GO:0045892">
    <property type="term" value="P:negative regulation of DNA-templated transcription"/>
    <property type="evidence" value="ECO:0000314"/>
    <property type="project" value="UniProtKB"/>
</dbReference>
<dbReference type="GO" id="GO:0045719">
    <property type="term" value="P:negative regulation of glycogen biosynthetic process"/>
    <property type="evidence" value="ECO:0000315"/>
    <property type="project" value="UniProtKB"/>
</dbReference>
<dbReference type="GO" id="GO:0046627">
    <property type="term" value="P:negative regulation of insulin receptor signaling pathway"/>
    <property type="evidence" value="ECO:0000315"/>
    <property type="project" value="UniProtKB"/>
</dbReference>
<dbReference type="GO" id="GO:0051898">
    <property type="term" value="P:negative regulation of phosphatidylinositol 3-kinase/protein kinase B signal transduction"/>
    <property type="evidence" value="ECO:0000315"/>
    <property type="project" value="UniProtKB"/>
</dbReference>
<dbReference type="GO" id="GO:0090315">
    <property type="term" value="P:negative regulation of protein targeting to membrane"/>
    <property type="evidence" value="ECO:0000250"/>
    <property type="project" value="UniProtKB"/>
</dbReference>
<dbReference type="GO" id="GO:0045869">
    <property type="term" value="P:negative regulation of single stranded viral RNA replication via double stranded DNA intermediate"/>
    <property type="evidence" value="ECO:0000250"/>
    <property type="project" value="UniProtKB"/>
</dbReference>
<dbReference type="GO" id="GO:0051497">
    <property type="term" value="P:negative regulation of stress fiber assembly"/>
    <property type="evidence" value="ECO:0000250"/>
    <property type="project" value="UniProtKB"/>
</dbReference>
<dbReference type="GO" id="GO:0046856">
    <property type="term" value="P:phosphatidylinositol dephosphorylation"/>
    <property type="evidence" value="ECO:0000250"/>
    <property type="project" value="UniProtKB"/>
</dbReference>
<dbReference type="GO" id="GO:0045893">
    <property type="term" value="P:positive regulation of DNA-templated transcription"/>
    <property type="evidence" value="ECO:0000314"/>
    <property type="project" value="UniProtKB"/>
</dbReference>
<dbReference type="GO" id="GO:2001153">
    <property type="term" value="P:positive regulation of renal water transport"/>
    <property type="evidence" value="ECO:0000314"/>
    <property type="project" value="UniProtKB"/>
</dbReference>
<dbReference type="GO" id="GO:0035810">
    <property type="term" value="P:positive regulation of urine volume"/>
    <property type="evidence" value="ECO:0000314"/>
    <property type="project" value="UniProtKB"/>
</dbReference>
<dbReference type="GO" id="GO:0072659">
    <property type="term" value="P:protein localization to plasma membrane"/>
    <property type="evidence" value="ECO:0000314"/>
    <property type="project" value="UniProtKB"/>
</dbReference>
<dbReference type="GO" id="GO:0005979">
    <property type="term" value="P:regulation of glycogen biosynthetic process"/>
    <property type="evidence" value="ECO:0000315"/>
    <property type="project" value="UniProtKB"/>
</dbReference>
<dbReference type="GO" id="GO:0032868">
    <property type="term" value="P:response to insulin"/>
    <property type="evidence" value="ECO:0000315"/>
    <property type="project" value="MGI"/>
</dbReference>
<dbReference type="GO" id="GO:0097178">
    <property type="term" value="P:ruffle assembly"/>
    <property type="evidence" value="ECO:0000250"/>
    <property type="project" value="UniProtKB"/>
</dbReference>
<dbReference type="FunFam" id="2.60.40.2840:FF:000005">
    <property type="entry name" value="inositol polyphosphate 5-phosphatase K"/>
    <property type="match status" value="1"/>
</dbReference>
<dbReference type="FunFam" id="3.60.10.10:FF:000032">
    <property type="entry name" value="inositol polyphosphate 5-phosphatase K isoform X1"/>
    <property type="match status" value="1"/>
</dbReference>
<dbReference type="Gene3D" id="2.60.40.2840">
    <property type="match status" value="1"/>
</dbReference>
<dbReference type="Gene3D" id="3.60.10.10">
    <property type="entry name" value="Endonuclease/exonuclease/phosphatase"/>
    <property type="match status" value="1"/>
</dbReference>
<dbReference type="InterPro" id="IPR036691">
    <property type="entry name" value="Endo/exonu/phosph_ase_sf"/>
</dbReference>
<dbReference type="InterPro" id="IPR046985">
    <property type="entry name" value="IP5"/>
</dbReference>
<dbReference type="InterPro" id="IPR000300">
    <property type="entry name" value="IPPc"/>
</dbReference>
<dbReference type="InterPro" id="IPR041611">
    <property type="entry name" value="SKICH"/>
</dbReference>
<dbReference type="PANTHER" id="PTHR11200">
    <property type="entry name" value="INOSITOL 5-PHOSPHATASE"/>
    <property type="match status" value="1"/>
</dbReference>
<dbReference type="PANTHER" id="PTHR11200:SF117">
    <property type="entry name" value="INOSITOL POLYPHOSPHATE 5-PHOSPHATASE K"/>
    <property type="match status" value="1"/>
</dbReference>
<dbReference type="Pfam" id="PF22669">
    <property type="entry name" value="Exo_endo_phos2"/>
    <property type="match status" value="1"/>
</dbReference>
<dbReference type="Pfam" id="PF17751">
    <property type="entry name" value="SKICH"/>
    <property type="match status" value="1"/>
</dbReference>
<dbReference type="SMART" id="SM00128">
    <property type="entry name" value="IPPc"/>
    <property type="match status" value="1"/>
</dbReference>
<dbReference type="SUPFAM" id="SSF56219">
    <property type="entry name" value="DNase I-like"/>
    <property type="match status" value="1"/>
</dbReference>
<organism evidence="9">
    <name type="scientific">Mus musculus</name>
    <name type="common">Mouse</name>
    <dbReference type="NCBI Taxonomy" id="10090"/>
    <lineage>
        <taxon>Eukaryota</taxon>
        <taxon>Metazoa</taxon>
        <taxon>Chordata</taxon>
        <taxon>Craniata</taxon>
        <taxon>Vertebrata</taxon>
        <taxon>Euteleostomi</taxon>
        <taxon>Mammalia</taxon>
        <taxon>Eutheria</taxon>
        <taxon>Euarchontoglires</taxon>
        <taxon>Glires</taxon>
        <taxon>Rodentia</taxon>
        <taxon>Myomorpha</taxon>
        <taxon>Muroidea</taxon>
        <taxon>Muridae</taxon>
        <taxon>Murinae</taxon>
        <taxon>Mus</taxon>
        <taxon>Mus</taxon>
    </lineage>
</organism>
<comment type="function">
    <text evidence="1 3 4">Inositol 5-phosphatase which acts on inositol 1,4,5-trisphosphate, inositol 1,3,4,5-tetrakisphosphate, phosphatidylinositol 4,5-bisphosphate and phosphatidylinositol 3,4,5-trisphosphate. Has 6-fold higher affinity for phosphatidylinositol 4,5-bisphosphate than for inositol 1,4,5-trisphosphate (By similarity). Negatively regulates assembly of the actin cytoskeleton. Controls insulin-dependent glucose uptake among inositol 3,4,5-trisphosphate phosphatases; therefore, is the specific regulator for insulin signaling in skeletal muscle (PubMed:22247557, PubMed:22751929).</text>
</comment>
<comment type="catalytic activity">
    <reaction evidence="1 3 4">
        <text>1D-myo-inositol 1,4,5-trisphosphate + H2O = 1D-myo-inositol 1,4-bisphosphate + phosphate</text>
        <dbReference type="Rhea" id="RHEA:19797"/>
        <dbReference type="ChEBI" id="CHEBI:15377"/>
        <dbReference type="ChEBI" id="CHEBI:43474"/>
        <dbReference type="ChEBI" id="CHEBI:58282"/>
        <dbReference type="ChEBI" id="CHEBI:203600"/>
        <dbReference type="EC" id="3.1.3.56"/>
    </reaction>
</comment>
<comment type="catalytic activity">
    <reaction evidence="1">
        <text>1,2-dioctanoyl-sn-glycero-3-phospho-(1D-myo-inositol-3,4,5-trisphosphate) + H2O = 1,2-dioctanoyl-sn-glycero-3-phospho-(1D-myo-inositol-3,4-bisphosphate) + phosphate</text>
        <dbReference type="Rhea" id="RHEA:43548"/>
        <dbReference type="ChEBI" id="CHEBI:15377"/>
        <dbReference type="ChEBI" id="CHEBI:43474"/>
        <dbReference type="ChEBI" id="CHEBI:83416"/>
        <dbReference type="ChEBI" id="CHEBI:83417"/>
    </reaction>
</comment>
<comment type="catalytic activity">
    <reaction evidence="1">
        <text>1D-myo-inositol 1,3,4,5-tetrakisphosphate + H2O = 1D-myo-inositol 1,3,4-trisphosphate + phosphate</text>
        <dbReference type="Rhea" id="RHEA:11392"/>
        <dbReference type="ChEBI" id="CHEBI:15377"/>
        <dbReference type="ChEBI" id="CHEBI:43474"/>
        <dbReference type="ChEBI" id="CHEBI:57895"/>
        <dbReference type="ChEBI" id="CHEBI:58414"/>
        <dbReference type="EC" id="3.1.3.56"/>
    </reaction>
</comment>
<comment type="catalytic activity">
    <reaction evidence="1">
        <text>a 1,2-diacyl-sn-glycero-3-phospho-(1D-myo-inositol-4,5-bisphosphate) + H2O = a 1,2-diacyl-sn-glycero-3-phospho-(1D-myo-inositol 4-phosphate) + phosphate</text>
        <dbReference type="Rhea" id="RHEA:22764"/>
        <dbReference type="ChEBI" id="CHEBI:15377"/>
        <dbReference type="ChEBI" id="CHEBI:43474"/>
        <dbReference type="ChEBI" id="CHEBI:58178"/>
        <dbReference type="ChEBI" id="CHEBI:58456"/>
        <dbReference type="EC" id="3.1.3.36"/>
    </reaction>
</comment>
<comment type="catalytic activity">
    <reaction evidence="1">
        <text>a 1,2-diacyl-sn-glycero-3-phospho-(1D-myo-inositol-3,4,5-trisphosphate) + H2O = a 1,2-diacyl-sn-glycero-3-phospho-(1D-myo-inositol-3,4-bisphosphate) + phosphate</text>
        <dbReference type="Rhea" id="RHEA:25528"/>
        <dbReference type="ChEBI" id="CHEBI:15377"/>
        <dbReference type="ChEBI" id="CHEBI:43474"/>
        <dbReference type="ChEBI" id="CHEBI:57658"/>
        <dbReference type="ChEBI" id="CHEBI:57836"/>
        <dbReference type="EC" id="3.1.3.86"/>
    </reaction>
</comment>
<comment type="subunit">
    <text evidence="1">Interacts with GPR78; necessary for INPP5K localization at the endoplasmic reticulum. Interacts with PAK1; competes with GPR78.</text>
</comment>
<comment type="subcellular location">
    <subcellularLocation>
        <location evidence="3 4">Endoplasmic reticulum</location>
    </subcellularLocation>
    <subcellularLocation>
        <location evidence="1">Cytoplasm</location>
    </subcellularLocation>
    <text evidence="1">Following stimulation with EGF, translocates to membrane ruffles.</text>
</comment>
<comment type="tissue specificity">
    <text evidence="5">Expressed in the skeletal muscle and the eye.</text>
</comment>
<comment type="similarity">
    <text evidence="6">Belongs to the inositol 1,4,5-trisphosphate 5-phosphatase type II family.</text>
</comment>
<keyword id="KW-0963">Cytoplasm</keyword>
<keyword id="KW-0256">Endoplasmic reticulum</keyword>
<keyword id="KW-0378">Hydrolase</keyword>
<keyword id="KW-0443">Lipid metabolism</keyword>
<keyword id="KW-1185">Reference proteome</keyword>
<accession>Q8C5L6</accession>
<accession>O09040</accession>
<sequence>MQHGDRNTPGYREGIMSAVSLRRPSAPKGFALSVHVVTWNVASAAPTVDLSDLLQLNNQDLNLDIYIIGLQEMNFGIISLLSDAAFEDPWSSLFMDMLSPLNFVKISQVRMQGLLLLVFAKYQHLPYIQIISTKSTPTGLYGYWGNKGGVNVCLKLYGYYVSIINCHLPPHMYNNDQRLEHFDRILESLTFEGYDVPNILDHDLILWFGDMNFRIEDFGLLFVQESITRKYYKELWEKDQLFIAKKNDQLLREFQEGPLLFPPTYKFDRHSNNYDTSEKKRKPAWTDRILWRLKRQPSQASPLASSVPTSYFLLTLKNYVSHMAYSISDHKPVTGTFDLELNPLMSVPLITMMPEHLWTMENDMLISYTSTPEFLSSSWDWIGLYKVGMRHINDYVAYVWVGDNQVSYGNNPNQVYINISAIPDTEDQFLLCYYSNNLHSVVGISQPFKIPIRSFLREDTLYEPEPQI</sequence>
<evidence type="ECO:0000250" key="1">
    <source>
        <dbReference type="UniProtKB" id="Q9BT40"/>
    </source>
</evidence>
<evidence type="ECO:0000255" key="2"/>
<evidence type="ECO:0000269" key="3">
    <source>
    </source>
</evidence>
<evidence type="ECO:0000269" key="4">
    <source>
    </source>
</evidence>
<evidence type="ECO:0000269" key="5">
    <source>
    </source>
</evidence>
<evidence type="ECO:0000305" key="6"/>
<evidence type="ECO:0000312" key="7">
    <source>
        <dbReference type="EMBL" id="AAL90796.1"/>
    </source>
</evidence>
<evidence type="ECO:0000312" key="8">
    <source>
        <dbReference type="EMBL" id="AAL90797.1"/>
    </source>
</evidence>
<evidence type="ECO:0000312" key="9">
    <source>
        <dbReference type="EMBL" id="BAC37126.1"/>
    </source>
</evidence>
<evidence type="ECO:0000312" key="10">
    <source>
        <dbReference type="MGI" id="MGI:1194899"/>
    </source>
</evidence>
<proteinExistence type="evidence at protein level"/>
<reference evidence="6" key="1">
    <citation type="journal article" date="1997" name="Neuron">
        <title>The vibrator mutation causes neurodegeneration via reduced expression of PITP alpha: positional complementation cloning and extragenic suppression.</title>
        <authorList>
            <person name="Hamilton B.A."/>
            <person name="Smith D.J."/>
            <person name="Mueller K.L."/>
            <person name="Kerrebrock A.W."/>
            <person name="Bronson R.T."/>
            <person name="van Berkel V."/>
            <person name="Daly M.J."/>
            <person name="Kruglyak L."/>
            <person name="Reeve M.P."/>
            <person name="Nemhauser J.L."/>
            <person name="Hawkins T.L."/>
            <person name="Rubin E.M."/>
            <person name="Lander E.S."/>
        </authorList>
    </citation>
    <scope>NUCLEOTIDE SEQUENCE [GENOMIC DNA / MRNA]</scope>
</reference>
<reference evidence="7" key="2">
    <citation type="submission" date="2002-02" db="EMBL/GenBank/DDBJ databases">
        <authorList>
            <person name="Ehringer M.A."/>
            <person name="Thompson J."/>
            <person name="Conroy O."/>
            <person name="Xu Y."/>
            <person name="Yang F."/>
            <person name="Canniff J."/>
            <person name="Beeson M."/>
            <person name="Gordon L."/>
            <person name="Bennett B."/>
            <person name="Johnson T.E."/>
            <person name="Sikela J.M."/>
        </authorList>
    </citation>
    <scope>NUCLEOTIDE SEQUENCE [MRNA]</scope>
    <source>
        <strain evidence="7">ILS</strain>
        <strain evidence="8">ISS</strain>
    </source>
</reference>
<reference key="3">
    <citation type="journal article" date="2005" name="Science">
        <title>The transcriptional landscape of the mammalian genome.</title>
        <authorList>
            <person name="Carninci P."/>
            <person name="Kasukawa T."/>
            <person name="Katayama S."/>
            <person name="Gough J."/>
            <person name="Frith M.C."/>
            <person name="Maeda N."/>
            <person name="Oyama R."/>
            <person name="Ravasi T."/>
            <person name="Lenhard B."/>
            <person name="Wells C."/>
            <person name="Kodzius R."/>
            <person name="Shimokawa K."/>
            <person name="Bajic V.B."/>
            <person name="Brenner S.E."/>
            <person name="Batalov S."/>
            <person name="Forrest A.R."/>
            <person name="Zavolan M."/>
            <person name="Davis M.J."/>
            <person name="Wilming L.G."/>
            <person name="Aidinis V."/>
            <person name="Allen J.E."/>
            <person name="Ambesi-Impiombato A."/>
            <person name="Apweiler R."/>
            <person name="Aturaliya R.N."/>
            <person name="Bailey T.L."/>
            <person name="Bansal M."/>
            <person name="Baxter L."/>
            <person name="Beisel K.W."/>
            <person name="Bersano T."/>
            <person name="Bono H."/>
            <person name="Chalk A.M."/>
            <person name="Chiu K.P."/>
            <person name="Choudhary V."/>
            <person name="Christoffels A."/>
            <person name="Clutterbuck D.R."/>
            <person name="Crowe M.L."/>
            <person name="Dalla E."/>
            <person name="Dalrymple B.P."/>
            <person name="de Bono B."/>
            <person name="Della Gatta G."/>
            <person name="di Bernardo D."/>
            <person name="Down T."/>
            <person name="Engstrom P."/>
            <person name="Fagiolini M."/>
            <person name="Faulkner G."/>
            <person name="Fletcher C.F."/>
            <person name="Fukushima T."/>
            <person name="Furuno M."/>
            <person name="Futaki S."/>
            <person name="Gariboldi M."/>
            <person name="Georgii-Hemming P."/>
            <person name="Gingeras T.R."/>
            <person name="Gojobori T."/>
            <person name="Green R.E."/>
            <person name="Gustincich S."/>
            <person name="Harbers M."/>
            <person name="Hayashi Y."/>
            <person name="Hensch T.K."/>
            <person name="Hirokawa N."/>
            <person name="Hill D."/>
            <person name="Huminiecki L."/>
            <person name="Iacono M."/>
            <person name="Ikeo K."/>
            <person name="Iwama A."/>
            <person name="Ishikawa T."/>
            <person name="Jakt M."/>
            <person name="Kanapin A."/>
            <person name="Katoh M."/>
            <person name="Kawasawa Y."/>
            <person name="Kelso J."/>
            <person name="Kitamura H."/>
            <person name="Kitano H."/>
            <person name="Kollias G."/>
            <person name="Krishnan S.P."/>
            <person name="Kruger A."/>
            <person name="Kummerfeld S.K."/>
            <person name="Kurochkin I.V."/>
            <person name="Lareau L.F."/>
            <person name="Lazarevic D."/>
            <person name="Lipovich L."/>
            <person name="Liu J."/>
            <person name="Liuni S."/>
            <person name="McWilliam S."/>
            <person name="Madan Babu M."/>
            <person name="Madera M."/>
            <person name="Marchionni L."/>
            <person name="Matsuda H."/>
            <person name="Matsuzawa S."/>
            <person name="Miki H."/>
            <person name="Mignone F."/>
            <person name="Miyake S."/>
            <person name="Morris K."/>
            <person name="Mottagui-Tabar S."/>
            <person name="Mulder N."/>
            <person name="Nakano N."/>
            <person name="Nakauchi H."/>
            <person name="Ng P."/>
            <person name="Nilsson R."/>
            <person name="Nishiguchi S."/>
            <person name="Nishikawa S."/>
            <person name="Nori F."/>
            <person name="Ohara O."/>
            <person name="Okazaki Y."/>
            <person name="Orlando V."/>
            <person name="Pang K.C."/>
            <person name="Pavan W.J."/>
            <person name="Pavesi G."/>
            <person name="Pesole G."/>
            <person name="Petrovsky N."/>
            <person name="Piazza S."/>
            <person name="Reed J."/>
            <person name="Reid J.F."/>
            <person name="Ring B.Z."/>
            <person name="Ringwald M."/>
            <person name="Rost B."/>
            <person name="Ruan Y."/>
            <person name="Salzberg S.L."/>
            <person name="Sandelin A."/>
            <person name="Schneider C."/>
            <person name="Schoenbach C."/>
            <person name="Sekiguchi K."/>
            <person name="Semple C.A."/>
            <person name="Seno S."/>
            <person name="Sessa L."/>
            <person name="Sheng Y."/>
            <person name="Shibata Y."/>
            <person name="Shimada H."/>
            <person name="Shimada K."/>
            <person name="Silva D."/>
            <person name="Sinclair B."/>
            <person name="Sperling S."/>
            <person name="Stupka E."/>
            <person name="Sugiura K."/>
            <person name="Sultana R."/>
            <person name="Takenaka Y."/>
            <person name="Taki K."/>
            <person name="Tammoja K."/>
            <person name="Tan S.L."/>
            <person name="Tang S."/>
            <person name="Taylor M.S."/>
            <person name="Tegner J."/>
            <person name="Teichmann S.A."/>
            <person name="Ueda H.R."/>
            <person name="van Nimwegen E."/>
            <person name="Verardo R."/>
            <person name="Wei C.L."/>
            <person name="Yagi K."/>
            <person name="Yamanishi H."/>
            <person name="Zabarovsky E."/>
            <person name="Zhu S."/>
            <person name="Zimmer A."/>
            <person name="Hide W."/>
            <person name="Bult C."/>
            <person name="Grimmond S.M."/>
            <person name="Teasdale R.D."/>
            <person name="Liu E.T."/>
            <person name="Brusic V."/>
            <person name="Quackenbush J."/>
            <person name="Wahlestedt C."/>
            <person name="Mattick J.S."/>
            <person name="Hume D.A."/>
            <person name="Kai C."/>
            <person name="Sasaki D."/>
            <person name="Tomaru Y."/>
            <person name="Fukuda S."/>
            <person name="Kanamori-Katayama M."/>
            <person name="Suzuki M."/>
            <person name="Aoki J."/>
            <person name="Arakawa T."/>
            <person name="Iida J."/>
            <person name="Imamura K."/>
            <person name="Itoh M."/>
            <person name="Kato T."/>
            <person name="Kawaji H."/>
            <person name="Kawagashira N."/>
            <person name="Kawashima T."/>
            <person name="Kojima M."/>
            <person name="Kondo S."/>
            <person name="Konno H."/>
            <person name="Nakano K."/>
            <person name="Ninomiya N."/>
            <person name="Nishio T."/>
            <person name="Okada M."/>
            <person name="Plessy C."/>
            <person name="Shibata K."/>
            <person name="Shiraki T."/>
            <person name="Suzuki S."/>
            <person name="Tagami M."/>
            <person name="Waki K."/>
            <person name="Watahiki A."/>
            <person name="Okamura-Oho Y."/>
            <person name="Suzuki H."/>
            <person name="Kawai J."/>
            <person name="Hayashizaki Y."/>
        </authorList>
    </citation>
    <scope>NUCLEOTIDE SEQUENCE [LARGE SCALE MRNA]</scope>
    <source>
        <strain>C57BL/6J</strain>
        <tissue>Medulla oblongata</tissue>
        <tissue>Ovary</tissue>
    </source>
</reference>
<reference key="4">
    <citation type="journal article" date="2004" name="Genome Res.">
        <title>The status, quality, and expansion of the NIH full-length cDNA project: the Mammalian Gene Collection (MGC).</title>
        <authorList>
            <consortium name="The MGC Project Team"/>
        </authorList>
    </citation>
    <scope>NUCLEOTIDE SEQUENCE [LARGE SCALE MRNA]</scope>
    <source>
        <strain>C57BL/6J</strain>
        <tissue>Brain</tissue>
    </source>
</reference>
<reference key="5">
    <citation type="journal article" date="2010" name="Cell">
        <title>A tissue-specific atlas of mouse protein phosphorylation and expression.</title>
        <authorList>
            <person name="Huttlin E.L."/>
            <person name="Jedrychowski M.P."/>
            <person name="Elias J.E."/>
            <person name="Goswami T."/>
            <person name="Rad R."/>
            <person name="Beausoleil S.A."/>
            <person name="Villen J."/>
            <person name="Haas W."/>
            <person name="Sowa M.E."/>
            <person name="Gygi S.P."/>
        </authorList>
    </citation>
    <scope>IDENTIFICATION BY MASS SPECTROMETRY [LARGE SCALE ANALYSIS]</scope>
    <source>
        <tissue>Lung</tissue>
    </source>
</reference>
<reference key="6">
    <citation type="journal article" date="2012" name="J. Biol. Chem.">
        <title>Regulation of insulin signaling and glucose transporter 4 (GLUT4) exocytosis by phosphatidylinositol 3,4,5-trisphosphate (PIP3) phosphatase, skeletal muscle, and kidney enriched inositol polyphosphate phosphatase (SKIP).</title>
        <authorList>
            <person name="Ijuin T."/>
            <person name="Takenawa T."/>
        </authorList>
    </citation>
    <scope>FUNCTION</scope>
    <scope>CATALYTIC ACTIVITY</scope>
    <scope>SUBCELLULAR LOCATION</scope>
</reference>
<reference key="7">
    <citation type="journal article" date="2012" name="Mol. Cell. Biol.">
        <title>Regulation of insulin signaling by the phosphatidylinositol 3,4,5-triphosphate phosphatase SKIP through the scaffolding function of Pak1.</title>
        <authorList>
            <person name="Ijuin T."/>
            <person name="Takenawa T."/>
        </authorList>
    </citation>
    <scope>FUNCTION</scope>
    <scope>CATALYTIC ACTIVITY</scope>
    <scope>SUBCELLULAR LOCATION</scope>
    <scope>INTERACTION WITH PAK1</scope>
</reference>
<reference key="8">
    <citation type="journal article" date="2017" name="Am. J. Hum. Genet.">
        <title>Mutations in INPP5K, Encoding a Phosphoinositide 5-Phosphatase, Cause Congenital muscular dystrophy with cataracts and mild cognitive impairment.</title>
        <authorList>
            <person name="Wiessner M."/>
            <person name="Roos A."/>
            <person name="Munn C.J."/>
            <person name="Viswanathan R."/>
            <person name="Whyte T."/>
            <person name="Cox D."/>
            <person name="Schoser B."/>
            <person name="Sewry C."/>
            <person name="Roper H."/>
            <person name="Phadke R."/>
            <person name="Marini Bettolo C."/>
            <person name="Barresi R."/>
            <person name="Charlton R."/>
            <person name="Boennemann C.G."/>
            <person name="Abath Neto O."/>
            <person name="Reed U.C."/>
            <person name="Zanoteli E."/>
            <person name="Araujo Martins Moreno C."/>
            <person name="Ertl-Wagner B."/>
            <person name="Stucka R."/>
            <person name="De Goede C."/>
            <person name="Borges da Silva T."/>
            <person name="Hathazi D."/>
            <person name="Dell'Aica M."/>
            <person name="Zahedi R.P."/>
            <person name="Thiele S."/>
            <person name="Mueller J."/>
            <person name="Kingston H."/>
            <person name="Mueller S."/>
            <person name="Curtis E."/>
            <person name="Walter M.C."/>
            <person name="Strom T.M."/>
            <person name="Straub V."/>
            <person name="Bushby K."/>
            <person name="Muntoni F."/>
            <person name="Swan L.E."/>
            <person name="Lochmueller H."/>
            <person name="Senderek J."/>
        </authorList>
    </citation>
    <scope>TISSUE SPECIFICITY</scope>
</reference>
<gene>
    <name evidence="10" type="primary">Inpp5k</name>
    <name type="synonym">Pps</name>
    <name evidence="1" type="synonym">Skip</name>
</gene>
<feature type="chain" id="PRO_0000209728" description="Inositol polyphosphate 5-phosphatase K">
    <location>
        <begin position="1"/>
        <end position="468"/>
    </location>
</feature>
<feature type="region of interest" description="Catalytic" evidence="2">
    <location>
        <begin position="34"/>
        <end position="337"/>
    </location>
</feature>
<feature type="region of interest" description="Required for interaction with GPR78 and PAK1" evidence="1">
    <location>
        <begin position="318"/>
        <end position="448"/>
    </location>
</feature>
<feature type="region of interest" description="Required for ruffle localization">
    <location>
        <begin position="340"/>
        <end position="468"/>
    </location>
</feature>
<feature type="sequence conflict" description="In Ref. 3; BAC37126." evidence="6" ref="3">
    <original>D</original>
    <variation>E</variation>
    <location>
        <position position="329"/>
    </location>
</feature>
<protein>
    <recommendedName>
        <fullName evidence="6">Inositol polyphosphate 5-phosphatase K</fullName>
        <ecNumber evidence="3 4">3.1.3.56</ecNumber>
    </recommendedName>
    <alternativeName>
        <fullName>Phosphatidylinositol-3,4,5-trisphosphate 5-phosphatase</fullName>
        <ecNumber evidence="1">3.1.3.86</ecNumber>
    </alternativeName>
    <alternativeName>
        <fullName>Phosphatidylinositol-4,5-bisphosphate 5-phosphatase</fullName>
        <ecNumber evidence="1">3.1.3.36</ecNumber>
    </alternativeName>
    <alternativeName>
        <fullName evidence="1">Skeletal muscle and kidney-enriched inositol phosphatase</fullName>
    </alternativeName>
</protein>
<name>INP5K_MOUSE</name>